<feature type="chain" id="PRO_0000224761" description="Elongation factor 4">
    <location>
        <begin position="1"/>
        <end position="598"/>
    </location>
</feature>
<feature type="domain" description="tr-type G">
    <location>
        <begin position="4"/>
        <end position="186"/>
    </location>
</feature>
<feature type="binding site" evidence="1">
    <location>
        <begin position="16"/>
        <end position="21"/>
    </location>
    <ligand>
        <name>GTP</name>
        <dbReference type="ChEBI" id="CHEBI:37565"/>
    </ligand>
</feature>
<feature type="binding site" evidence="1">
    <location>
        <begin position="133"/>
        <end position="136"/>
    </location>
    <ligand>
        <name>GTP</name>
        <dbReference type="ChEBI" id="CHEBI:37565"/>
    </ligand>
</feature>
<name>LEPA_EHRRW</name>
<protein>
    <recommendedName>
        <fullName evidence="1">Elongation factor 4</fullName>
        <shortName evidence="1">EF-4</shortName>
        <ecNumber evidence="1">3.6.5.n1</ecNumber>
    </recommendedName>
    <alternativeName>
        <fullName evidence="1">Ribosomal back-translocase LepA</fullName>
    </alternativeName>
</protein>
<sequence>MDKINIRNFAIIAHIDHGKSTLADRLIEECNGLEKREMKDQVLDSMDIERERGITIKAQTVRLMYTAKDGKVYYLNLMDTPGHVDFSYEVSRSLAACEGSLLVVDSTQGVEAQTLANVYKAIDSNHEIIPVLNKIDLASSDPDKVKSQIEEIIGIDASESLLVSAKSGIGIKDVLEAIVSRLPAPSGNFDNPLKAILVDTWYDTYLGIVILLRVVDGVIKKGMKIVMMSSNAVYQVDNIGIFTPHKKIVDQLSVGEIGFITASIKELSDCKIGDTITEEQRRCDNPMPGFRTIHPVVFCSIFPNEAGDFERLREALKKLQLNDASFTFDIEVSNALGYGFRCGFLGMLHLEVIQERLEREFNLDLTATAPGVVYQIISKNGILREVHNPHDFGDVQDIASIKEPWICATIMVPDQYLGVVMSLCNNKRGEKVDLSYSGNTALLKYRLPLSEVVFDFYDRIKSISKGYASLDWEMDGYMDSEIAKLTILINSEPVDALACIVHKSKVEQRGREICLRLKDLIPRQQYKIAIQAAVGSKIIARETISPYRKDVTAKLYGGDVTRRMKLLEKQKKGKKRLRAIGNVNVPHNAFIQALKIID</sequence>
<organism>
    <name type="scientific">Ehrlichia ruminantium (strain Welgevonden)</name>
    <dbReference type="NCBI Taxonomy" id="254945"/>
    <lineage>
        <taxon>Bacteria</taxon>
        <taxon>Pseudomonadati</taxon>
        <taxon>Pseudomonadota</taxon>
        <taxon>Alphaproteobacteria</taxon>
        <taxon>Rickettsiales</taxon>
        <taxon>Anaplasmataceae</taxon>
        <taxon>Ehrlichia</taxon>
    </lineage>
</organism>
<evidence type="ECO:0000255" key="1">
    <source>
        <dbReference type="HAMAP-Rule" id="MF_00071"/>
    </source>
</evidence>
<comment type="function">
    <text evidence="1">Required for accurate and efficient protein synthesis under certain stress conditions. May act as a fidelity factor of the translation reaction, by catalyzing a one-codon backward translocation of tRNAs on improperly translocated ribosomes. Back-translocation proceeds from a post-translocation (POST) complex to a pre-translocation (PRE) complex, thus giving elongation factor G a second chance to translocate the tRNAs correctly. Binds to ribosomes in a GTP-dependent manner.</text>
</comment>
<comment type="catalytic activity">
    <reaction evidence="1">
        <text>GTP + H2O = GDP + phosphate + H(+)</text>
        <dbReference type="Rhea" id="RHEA:19669"/>
        <dbReference type="ChEBI" id="CHEBI:15377"/>
        <dbReference type="ChEBI" id="CHEBI:15378"/>
        <dbReference type="ChEBI" id="CHEBI:37565"/>
        <dbReference type="ChEBI" id="CHEBI:43474"/>
        <dbReference type="ChEBI" id="CHEBI:58189"/>
        <dbReference type="EC" id="3.6.5.n1"/>
    </reaction>
</comment>
<comment type="subcellular location">
    <subcellularLocation>
        <location evidence="1">Cell inner membrane</location>
        <topology evidence="1">Peripheral membrane protein</topology>
        <orientation evidence="1">Cytoplasmic side</orientation>
    </subcellularLocation>
</comment>
<comment type="similarity">
    <text evidence="1">Belongs to the TRAFAC class translation factor GTPase superfamily. Classic translation factor GTPase family. LepA subfamily.</text>
</comment>
<keyword id="KW-0997">Cell inner membrane</keyword>
<keyword id="KW-1003">Cell membrane</keyword>
<keyword id="KW-0342">GTP-binding</keyword>
<keyword id="KW-0378">Hydrolase</keyword>
<keyword id="KW-0472">Membrane</keyword>
<keyword id="KW-0547">Nucleotide-binding</keyword>
<keyword id="KW-0648">Protein biosynthesis</keyword>
<proteinExistence type="inferred from homology"/>
<gene>
    <name evidence="1" type="primary">lepA</name>
    <name type="ordered locus">Erum3560</name>
    <name type="ordered locus">ERWE_CDS_03630</name>
</gene>
<dbReference type="EC" id="3.6.5.n1" evidence="1"/>
<dbReference type="EMBL" id="CR767821">
    <property type="protein sequence ID" value="CAH58076.1"/>
    <property type="molecule type" value="Genomic_DNA"/>
</dbReference>
<dbReference type="EMBL" id="CR925678">
    <property type="protein sequence ID" value="CAI26857.1"/>
    <property type="molecule type" value="Genomic_DNA"/>
</dbReference>
<dbReference type="RefSeq" id="WP_011155037.1">
    <property type="nucleotide sequence ID" value="NC_005295.2"/>
</dbReference>
<dbReference type="SMR" id="Q5HBH4"/>
<dbReference type="GeneID" id="33057966"/>
<dbReference type="KEGG" id="eru:Erum3560"/>
<dbReference type="KEGG" id="erw:ERWE_CDS_03630"/>
<dbReference type="eggNOG" id="COG0481">
    <property type="taxonomic scope" value="Bacteria"/>
</dbReference>
<dbReference type="HOGENOM" id="CLU_009995_3_3_5"/>
<dbReference type="Proteomes" id="UP000001021">
    <property type="component" value="Chromosome"/>
</dbReference>
<dbReference type="GO" id="GO:0005886">
    <property type="term" value="C:plasma membrane"/>
    <property type="evidence" value="ECO:0007669"/>
    <property type="project" value="UniProtKB-SubCell"/>
</dbReference>
<dbReference type="GO" id="GO:0005525">
    <property type="term" value="F:GTP binding"/>
    <property type="evidence" value="ECO:0007669"/>
    <property type="project" value="UniProtKB-UniRule"/>
</dbReference>
<dbReference type="GO" id="GO:0003924">
    <property type="term" value="F:GTPase activity"/>
    <property type="evidence" value="ECO:0007669"/>
    <property type="project" value="UniProtKB-UniRule"/>
</dbReference>
<dbReference type="GO" id="GO:0097216">
    <property type="term" value="F:guanosine tetraphosphate binding"/>
    <property type="evidence" value="ECO:0007669"/>
    <property type="project" value="UniProtKB-ARBA"/>
</dbReference>
<dbReference type="GO" id="GO:0043022">
    <property type="term" value="F:ribosome binding"/>
    <property type="evidence" value="ECO:0007669"/>
    <property type="project" value="UniProtKB-UniRule"/>
</dbReference>
<dbReference type="GO" id="GO:0003746">
    <property type="term" value="F:translation elongation factor activity"/>
    <property type="evidence" value="ECO:0007669"/>
    <property type="project" value="UniProtKB-UniRule"/>
</dbReference>
<dbReference type="GO" id="GO:0045727">
    <property type="term" value="P:positive regulation of translation"/>
    <property type="evidence" value="ECO:0007669"/>
    <property type="project" value="UniProtKB-UniRule"/>
</dbReference>
<dbReference type="CDD" id="cd03699">
    <property type="entry name" value="EF4_II"/>
    <property type="match status" value="1"/>
</dbReference>
<dbReference type="CDD" id="cd16260">
    <property type="entry name" value="EF4_III"/>
    <property type="match status" value="1"/>
</dbReference>
<dbReference type="CDD" id="cd01890">
    <property type="entry name" value="LepA"/>
    <property type="match status" value="1"/>
</dbReference>
<dbReference type="CDD" id="cd03709">
    <property type="entry name" value="lepA_C"/>
    <property type="match status" value="1"/>
</dbReference>
<dbReference type="FunFam" id="3.40.50.300:FF:000078">
    <property type="entry name" value="Elongation factor 4"/>
    <property type="match status" value="1"/>
</dbReference>
<dbReference type="FunFam" id="2.40.30.10:FF:000015">
    <property type="entry name" value="Translation factor GUF1, mitochondrial"/>
    <property type="match status" value="1"/>
</dbReference>
<dbReference type="FunFam" id="3.30.70.240:FF:000007">
    <property type="entry name" value="Translation factor GUF1, mitochondrial"/>
    <property type="match status" value="1"/>
</dbReference>
<dbReference type="FunFam" id="3.30.70.2570:FF:000001">
    <property type="entry name" value="Translation factor GUF1, mitochondrial"/>
    <property type="match status" value="1"/>
</dbReference>
<dbReference type="FunFam" id="3.30.70.870:FF:000004">
    <property type="entry name" value="Translation factor GUF1, mitochondrial"/>
    <property type="match status" value="1"/>
</dbReference>
<dbReference type="Gene3D" id="3.30.70.240">
    <property type="match status" value="1"/>
</dbReference>
<dbReference type="Gene3D" id="3.30.70.2570">
    <property type="entry name" value="Elongation factor 4, C-terminal domain"/>
    <property type="match status" value="1"/>
</dbReference>
<dbReference type="Gene3D" id="3.30.70.870">
    <property type="entry name" value="Elongation Factor G (Translational Gtpase), domain 3"/>
    <property type="match status" value="1"/>
</dbReference>
<dbReference type="Gene3D" id="3.40.50.300">
    <property type="entry name" value="P-loop containing nucleotide triphosphate hydrolases"/>
    <property type="match status" value="1"/>
</dbReference>
<dbReference type="Gene3D" id="2.40.30.10">
    <property type="entry name" value="Translation factors"/>
    <property type="match status" value="1"/>
</dbReference>
<dbReference type="HAMAP" id="MF_00071">
    <property type="entry name" value="LepA"/>
    <property type="match status" value="1"/>
</dbReference>
<dbReference type="InterPro" id="IPR006297">
    <property type="entry name" value="EF-4"/>
</dbReference>
<dbReference type="InterPro" id="IPR041095">
    <property type="entry name" value="EFG_II"/>
</dbReference>
<dbReference type="InterPro" id="IPR035647">
    <property type="entry name" value="EFG_III/V"/>
</dbReference>
<dbReference type="InterPro" id="IPR000640">
    <property type="entry name" value="EFG_V-like"/>
</dbReference>
<dbReference type="InterPro" id="IPR004161">
    <property type="entry name" value="EFTu-like_2"/>
</dbReference>
<dbReference type="InterPro" id="IPR031157">
    <property type="entry name" value="G_TR_CS"/>
</dbReference>
<dbReference type="InterPro" id="IPR038363">
    <property type="entry name" value="LepA_C_sf"/>
</dbReference>
<dbReference type="InterPro" id="IPR013842">
    <property type="entry name" value="LepA_CTD"/>
</dbReference>
<dbReference type="InterPro" id="IPR035654">
    <property type="entry name" value="LepA_IV"/>
</dbReference>
<dbReference type="InterPro" id="IPR027417">
    <property type="entry name" value="P-loop_NTPase"/>
</dbReference>
<dbReference type="InterPro" id="IPR005225">
    <property type="entry name" value="Small_GTP-bd"/>
</dbReference>
<dbReference type="InterPro" id="IPR000795">
    <property type="entry name" value="T_Tr_GTP-bd_dom"/>
</dbReference>
<dbReference type="NCBIfam" id="TIGR01393">
    <property type="entry name" value="lepA"/>
    <property type="match status" value="1"/>
</dbReference>
<dbReference type="NCBIfam" id="TIGR00231">
    <property type="entry name" value="small_GTP"/>
    <property type="match status" value="1"/>
</dbReference>
<dbReference type="PANTHER" id="PTHR43512:SF4">
    <property type="entry name" value="TRANSLATION FACTOR GUF1 HOMOLOG, CHLOROPLASTIC"/>
    <property type="match status" value="1"/>
</dbReference>
<dbReference type="PANTHER" id="PTHR43512">
    <property type="entry name" value="TRANSLATION FACTOR GUF1-RELATED"/>
    <property type="match status" value="1"/>
</dbReference>
<dbReference type="Pfam" id="PF00679">
    <property type="entry name" value="EFG_C"/>
    <property type="match status" value="1"/>
</dbReference>
<dbReference type="Pfam" id="PF14492">
    <property type="entry name" value="EFG_III"/>
    <property type="match status" value="1"/>
</dbReference>
<dbReference type="Pfam" id="PF00009">
    <property type="entry name" value="GTP_EFTU"/>
    <property type="match status" value="1"/>
</dbReference>
<dbReference type="Pfam" id="PF03144">
    <property type="entry name" value="GTP_EFTU_D2"/>
    <property type="match status" value="1"/>
</dbReference>
<dbReference type="Pfam" id="PF06421">
    <property type="entry name" value="LepA_C"/>
    <property type="match status" value="1"/>
</dbReference>
<dbReference type="PRINTS" id="PR00315">
    <property type="entry name" value="ELONGATNFCT"/>
</dbReference>
<dbReference type="SMART" id="SM00838">
    <property type="entry name" value="EFG_C"/>
    <property type="match status" value="1"/>
</dbReference>
<dbReference type="SUPFAM" id="SSF54980">
    <property type="entry name" value="EF-G C-terminal domain-like"/>
    <property type="match status" value="2"/>
</dbReference>
<dbReference type="SUPFAM" id="SSF52540">
    <property type="entry name" value="P-loop containing nucleoside triphosphate hydrolases"/>
    <property type="match status" value="1"/>
</dbReference>
<dbReference type="PROSITE" id="PS00301">
    <property type="entry name" value="G_TR_1"/>
    <property type="match status" value="1"/>
</dbReference>
<dbReference type="PROSITE" id="PS51722">
    <property type="entry name" value="G_TR_2"/>
    <property type="match status" value="1"/>
</dbReference>
<reference key="1">
    <citation type="journal article" date="2005" name="Proc. Natl. Acad. Sci. U.S.A.">
        <title>The genome of the heartwater agent Ehrlichia ruminantium contains multiple tandem repeats of actively variable copy number.</title>
        <authorList>
            <person name="Collins N.E."/>
            <person name="Liebenberg J."/>
            <person name="de Villiers E.P."/>
            <person name="Brayton K.A."/>
            <person name="Louw E."/>
            <person name="Pretorius A."/>
            <person name="Faber F.E."/>
            <person name="van Heerden H."/>
            <person name="Josemans A."/>
            <person name="van Kleef M."/>
            <person name="Steyn H.C."/>
            <person name="van Strijp M.F."/>
            <person name="Zweygarth E."/>
            <person name="Jongejan F."/>
            <person name="Maillard J.C."/>
            <person name="Berthier D."/>
            <person name="Botha M."/>
            <person name="Joubert F."/>
            <person name="Corton C.H."/>
            <person name="Thomson N.R."/>
            <person name="Allsopp M.T."/>
            <person name="Allsopp B.A."/>
        </authorList>
    </citation>
    <scope>NUCLEOTIDE SEQUENCE [LARGE SCALE GENOMIC DNA]</scope>
    <source>
        <strain>Welgevonden</strain>
    </source>
</reference>
<reference key="2">
    <citation type="journal article" date="2006" name="J. Bacteriol.">
        <title>Comparative genomic analysis of three strains of Ehrlichia ruminantium reveals an active process of genome size plasticity.</title>
        <authorList>
            <person name="Frutos R."/>
            <person name="Viari A."/>
            <person name="Ferraz C."/>
            <person name="Morgat A."/>
            <person name="Eychenie S."/>
            <person name="Kandassamy Y."/>
            <person name="Chantal I."/>
            <person name="Bensaid A."/>
            <person name="Coissac E."/>
            <person name="Vachiery N."/>
            <person name="Demaille J."/>
            <person name="Martinez D."/>
        </authorList>
    </citation>
    <scope>NUCLEOTIDE SEQUENCE [LARGE SCALE GENOMIC DNA]</scope>
    <source>
        <strain>Welgevonden</strain>
    </source>
</reference>
<accession>Q5HBH4</accession>
<accession>Q5FEG0</accession>